<proteinExistence type="inferred from homology"/>
<organism>
    <name type="scientific">Emericella nidulans (strain FGSC A4 / ATCC 38163 / CBS 112.46 / NRRL 194 / M139)</name>
    <name type="common">Aspergillus nidulans</name>
    <dbReference type="NCBI Taxonomy" id="227321"/>
    <lineage>
        <taxon>Eukaryota</taxon>
        <taxon>Fungi</taxon>
        <taxon>Dikarya</taxon>
        <taxon>Ascomycota</taxon>
        <taxon>Pezizomycotina</taxon>
        <taxon>Eurotiomycetes</taxon>
        <taxon>Eurotiomycetidae</taxon>
        <taxon>Eurotiales</taxon>
        <taxon>Aspergillaceae</taxon>
        <taxon>Aspergillus</taxon>
        <taxon>Aspergillus subgen. Nidulantes</taxon>
    </lineage>
</organism>
<gene>
    <name type="primary">ssn3</name>
    <name type="synonym">cdk8</name>
    <name type="ORF">AN2489</name>
</gene>
<name>SSN3_EMENI</name>
<reference key="1">
    <citation type="journal article" date="2005" name="Nature">
        <title>Sequencing of Aspergillus nidulans and comparative analysis with A. fumigatus and A. oryzae.</title>
        <authorList>
            <person name="Galagan J.E."/>
            <person name="Calvo S.E."/>
            <person name="Cuomo C."/>
            <person name="Ma L.-J."/>
            <person name="Wortman J.R."/>
            <person name="Batzoglou S."/>
            <person name="Lee S.-I."/>
            <person name="Bastuerkmen M."/>
            <person name="Spevak C.C."/>
            <person name="Clutterbuck J."/>
            <person name="Kapitonov V."/>
            <person name="Jurka J."/>
            <person name="Scazzocchio C."/>
            <person name="Farman M.L."/>
            <person name="Butler J."/>
            <person name="Purcell S."/>
            <person name="Harris S."/>
            <person name="Braus G.H."/>
            <person name="Draht O."/>
            <person name="Busch S."/>
            <person name="D'Enfert C."/>
            <person name="Bouchier C."/>
            <person name="Goldman G.H."/>
            <person name="Bell-Pedersen D."/>
            <person name="Griffiths-Jones S."/>
            <person name="Doonan J.H."/>
            <person name="Yu J."/>
            <person name="Vienken K."/>
            <person name="Pain A."/>
            <person name="Freitag M."/>
            <person name="Selker E.U."/>
            <person name="Archer D.B."/>
            <person name="Penalva M.A."/>
            <person name="Oakley B.R."/>
            <person name="Momany M."/>
            <person name="Tanaka T."/>
            <person name="Kumagai T."/>
            <person name="Asai K."/>
            <person name="Machida M."/>
            <person name="Nierman W.C."/>
            <person name="Denning D.W."/>
            <person name="Caddick M.X."/>
            <person name="Hynes M."/>
            <person name="Paoletti M."/>
            <person name="Fischer R."/>
            <person name="Miller B.L."/>
            <person name="Dyer P.S."/>
            <person name="Sachs M.S."/>
            <person name="Osmani S.A."/>
            <person name="Birren B.W."/>
        </authorList>
    </citation>
    <scope>NUCLEOTIDE SEQUENCE [LARGE SCALE GENOMIC DNA]</scope>
    <source>
        <strain>FGSC A4 / ATCC 38163 / CBS 112.46 / NRRL 194 / M139</strain>
    </source>
</reference>
<reference key="2">
    <citation type="journal article" date="2009" name="Fungal Genet. Biol.">
        <title>The 2008 update of the Aspergillus nidulans genome annotation: a community effort.</title>
        <authorList>
            <person name="Wortman J.R."/>
            <person name="Gilsenan J.M."/>
            <person name="Joardar V."/>
            <person name="Deegan J."/>
            <person name="Clutterbuck J."/>
            <person name="Andersen M.R."/>
            <person name="Archer D."/>
            <person name="Bencina M."/>
            <person name="Braus G."/>
            <person name="Coutinho P."/>
            <person name="von Dohren H."/>
            <person name="Doonan J."/>
            <person name="Driessen A.J."/>
            <person name="Durek P."/>
            <person name="Espeso E."/>
            <person name="Fekete E."/>
            <person name="Flipphi M."/>
            <person name="Estrada C.G."/>
            <person name="Geysens S."/>
            <person name="Goldman G."/>
            <person name="de Groot P.W."/>
            <person name="Hansen K."/>
            <person name="Harris S.D."/>
            <person name="Heinekamp T."/>
            <person name="Helmstaedt K."/>
            <person name="Henrissat B."/>
            <person name="Hofmann G."/>
            <person name="Homan T."/>
            <person name="Horio T."/>
            <person name="Horiuchi H."/>
            <person name="James S."/>
            <person name="Jones M."/>
            <person name="Karaffa L."/>
            <person name="Karanyi Z."/>
            <person name="Kato M."/>
            <person name="Keller N."/>
            <person name="Kelly D.E."/>
            <person name="Kiel J.A."/>
            <person name="Kim J.M."/>
            <person name="van der Klei I.J."/>
            <person name="Klis F.M."/>
            <person name="Kovalchuk A."/>
            <person name="Krasevec N."/>
            <person name="Kubicek C.P."/>
            <person name="Liu B."/>
            <person name="Maccabe A."/>
            <person name="Meyer V."/>
            <person name="Mirabito P."/>
            <person name="Miskei M."/>
            <person name="Mos M."/>
            <person name="Mullins J."/>
            <person name="Nelson D.R."/>
            <person name="Nielsen J."/>
            <person name="Oakley B.R."/>
            <person name="Osmani S.A."/>
            <person name="Pakula T."/>
            <person name="Paszewski A."/>
            <person name="Paulsen I."/>
            <person name="Pilsyk S."/>
            <person name="Pocsi I."/>
            <person name="Punt P.J."/>
            <person name="Ram A.F."/>
            <person name="Ren Q."/>
            <person name="Robellet X."/>
            <person name="Robson G."/>
            <person name="Seiboth B."/>
            <person name="van Solingen P."/>
            <person name="Specht T."/>
            <person name="Sun J."/>
            <person name="Taheri-Talesh N."/>
            <person name="Takeshita N."/>
            <person name="Ussery D."/>
            <person name="vanKuyk P.A."/>
            <person name="Visser H."/>
            <person name="van de Vondervoort P.J."/>
            <person name="de Vries R.P."/>
            <person name="Walton J."/>
            <person name="Xiang X."/>
            <person name="Xiong Y."/>
            <person name="Zeng A.P."/>
            <person name="Brandt B.W."/>
            <person name="Cornell M.J."/>
            <person name="van den Hondel C.A."/>
            <person name="Visser J."/>
            <person name="Oliver S.G."/>
            <person name="Turner G."/>
        </authorList>
    </citation>
    <scope>GENOME REANNOTATION</scope>
    <source>
        <strain>FGSC A4 / ATCC 38163 / CBS 112.46 / NRRL 194 / M139</strain>
    </source>
</reference>
<comment type="function">
    <text evidence="1">Component of the srb8-11 complex. The srb8-11 complex is a regulatory module of the Mediator complex which is itself involved in regulation of basal and activated RNA polymerase II-dependent transcription. The srb8-11 complex may be involved in the transcriptional repression of a subset of genes regulated by Mediator. It may inhibit the association of the Mediator complex with RNA polymerase II to form the holoenzyme complex. The srb8-11 complex phosphorylates the C-terminal domain (CTD) of the largest subunit of RNA polymerase II (By similarity).</text>
</comment>
<comment type="catalytic activity">
    <reaction>
        <text>L-seryl-[protein] + ATP = O-phospho-L-seryl-[protein] + ADP + H(+)</text>
        <dbReference type="Rhea" id="RHEA:17989"/>
        <dbReference type="Rhea" id="RHEA-COMP:9863"/>
        <dbReference type="Rhea" id="RHEA-COMP:11604"/>
        <dbReference type="ChEBI" id="CHEBI:15378"/>
        <dbReference type="ChEBI" id="CHEBI:29999"/>
        <dbReference type="ChEBI" id="CHEBI:30616"/>
        <dbReference type="ChEBI" id="CHEBI:83421"/>
        <dbReference type="ChEBI" id="CHEBI:456216"/>
        <dbReference type="EC" id="2.7.11.22"/>
    </reaction>
</comment>
<comment type="catalytic activity">
    <reaction>
        <text>L-threonyl-[protein] + ATP = O-phospho-L-threonyl-[protein] + ADP + H(+)</text>
        <dbReference type="Rhea" id="RHEA:46608"/>
        <dbReference type="Rhea" id="RHEA-COMP:11060"/>
        <dbReference type="Rhea" id="RHEA-COMP:11605"/>
        <dbReference type="ChEBI" id="CHEBI:15378"/>
        <dbReference type="ChEBI" id="CHEBI:30013"/>
        <dbReference type="ChEBI" id="CHEBI:30616"/>
        <dbReference type="ChEBI" id="CHEBI:61977"/>
        <dbReference type="ChEBI" id="CHEBI:456216"/>
        <dbReference type="EC" id="2.7.11.22"/>
    </reaction>
</comment>
<comment type="catalytic activity">
    <reaction>
        <text>[DNA-directed RNA polymerase] + ATP = phospho-[DNA-directed RNA polymerase] + ADP + H(+)</text>
        <dbReference type="Rhea" id="RHEA:10216"/>
        <dbReference type="Rhea" id="RHEA-COMP:11321"/>
        <dbReference type="Rhea" id="RHEA-COMP:11322"/>
        <dbReference type="ChEBI" id="CHEBI:15378"/>
        <dbReference type="ChEBI" id="CHEBI:30616"/>
        <dbReference type="ChEBI" id="CHEBI:43176"/>
        <dbReference type="ChEBI" id="CHEBI:68546"/>
        <dbReference type="ChEBI" id="CHEBI:456216"/>
        <dbReference type="EC" id="2.7.11.23"/>
    </reaction>
</comment>
<comment type="cofactor">
    <cofactor evidence="1">
        <name>Mg(2+)</name>
        <dbReference type="ChEBI" id="CHEBI:18420"/>
    </cofactor>
</comment>
<comment type="subunit">
    <text evidence="1">Component of the srb8-11 complex, a regulatory module of the Mediator complex.</text>
</comment>
<comment type="subcellular location">
    <subcellularLocation>
        <location evidence="5">Nucleus</location>
    </subcellularLocation>
</comment>
<comment type="similarity">
    <text evidence="5">Belongs to the protein kinase superfamily. CMGC Ser/Thr protein kinase family. CDC2/CDKX subfamily.</text>
</comment>
<comment type="sequence caution" evidence="5">
    <conflict type="erroneous gene model prediction">
        <sequence resource="EMBL-CDS" id="CBF86960"/>
    </conflict>
</comment>
<comment type="sequence caution" evidence="5">
    <conflict type="erroneous gene model prediction">
        <sequence resource="EMBL-CDS" id="EAA63974"/>
    </conflict>
</comment>
<dbReference type="EC" id="2.7.11.22"/>
<dbReference type="EC" id="2.7.11.23"/>
<dbReference type="EMBL" id="AACD01000042">
    <property type="protein sequence ID" value="EAA63974.1"/>
    <property type="status" value="ALT_SEQ"/>
    <property type="molecule type" value="Genomic_DNA"/>
</dbReference>
<dbReference type="EMBL" id="BN001307">
    <property type="protein sequence ID" value="CBF86960.1"/>
    <property type="status" value="ALT_SEQ"/>
    <property type="molecule type" value="Genomic_DNA"/>
</dbReference>
<dbReference type="RefSeq" id="XP_660093.1">
    <property type="nucleotide sequence ID" value="XM_655001.1"/>
</dbReference>
<dbReference type="SMR" id="Q5BAE1"/>
<dbReference type="FunCoup" id="Q5BAE1">
    <property type="interactions" value="1017"/>
</dbReference>
<dbReference type="STRING" id="227321.Q5BAE1"/>
<dbReference type="KEGG" id="ani:ANIA_02489"/>
<dbReference type="eggNOG" id="KOG0666">
    <property type="taxonomic scope" value="Eukaryota"/>
</dbReference>
<dbReference type="HOGENOM" id="CLU_000288_181_6_1"/>
<dbReference type="InParanoid" id="Q5BAE1"/>
<dbReference type="OrthoDB" id="6284126at2759"/>
<dbReference type="Proteomes" id="UP000000560">
    <property type="component" value="Chromosome VII"/>
</dbReference>
<dbReference type="GO" id="GO:0016592">
    <property type="term" value="C:mediator complex"/>
    <property type="evidence" value="ECO:0000318"/>
    <property type="project" value="GO_Central"/>
</dbReference>
<dbReference type="GO" id="GO:0005634">
    <property type="term" value="C:nucleus"/>
    <property type="evidence" value="ECO:0000318"/>
    <property type="project" value="GO_Central"/>
</dbReference>
<dbReference type="GO" id="GO:0005524">
    <property type="term" value="F:ATP binding"/>
    <property type="evidence" value="ECO:0007669"/>
    <property type="project" value="UniProtKB-KW"/>
</dbReference>
<dbReference type="GO" id="GO:0004693">
    <property type="term" value="F:cyclin-dependent protein serine/threonine kinase activity"/>
    <property type="evidence" value="ECO:0000318"/>
    <property type="project" value="GO_Central"/>
</dbReference>
<dbReference type="GO" id="GO:0046872">
    <property type="term" value="F:metal ion binding"/>
    <property type="evidence" value="ECO:0007669"/>
    <property type="project" value="UniProtKB-KW"/>
</dbReference>
<dbReference type="GO" id="GO:0106310">
    <property type="term" value="F:protein serine kinase activity"/>
    <property type="evidence" value="ECO:0007669"/>
    <property type="project" value="RHEA"/>
</dbReference>
<dbReference type="GO" id="GO:0008353">
    <property type="term" value="F:RNA polymerase II CTD heptapeptide repeat kinase activity"/>
    <property type="evidence" value="ECO:0007669"/>
    <property type="project" value="UniProtKB-EC"/>
</dbReference>
<dbReference type="CDD" id="cd07842">
    <property type="entry name" value="STKc_CDK8_like"/>
    <property type="match status" value="1"/>
</dbReference>
<dbReference type="FunFam" id="1.10.510.10:FF:000408">
    <property type="entry name" value="Serine/threonine-protein kinase SSN3"/>
    <property type="match status" value="1"/>
</dbReference>
<dbReference type="FunFam" id="3.30.200.20:FF:000426">
    <property type="entry name" value="Serine/threonine-protein kinase ssn3"/>
    <property type="match status" value="1"/>
</dbReference>
<dbReference type="Gene3D" id="3.30.200.20">
    <property type="entry name" value="Phosphorylase Kinase, domain 1"/>
    <property type="match status" value="1"/>
</dbReference>
<dbReference type="Gene3D" id="1.10.510.10">
    <property type="entry name" value="Transferase(Phosphotransferase) domain 1"/>
    <property type="match status" value="1"/>
</dbReference>
<dbReference type="InterPro" id="IPR050108">
    <property type="entry name" value="CDK"/>
</dbReference>
<dbReference type="InterPro" id="IPR011009">
    <property type="entry name" value="Kinase-like_dom_sf"/>
</dbReference>
<dbReference type="InterPro" id="IPR000719">
    <property type="entry name" value="Prot_kinase_dom"/>
</dbReference>
<dbReference type="InterPro" id="IPR008271">
    <property type="entry name" value="Ser/Thr_kinase_AS"/>
</dbReference>
<dbReference type="PANTHER" id="PTHR24056">
    <property type="entry name" value="CELL DIVISION PROTEIN KINASE"/>
    <property type="match status" value="1"/>
</dbReference>
<dbReference type="PANTHER" id="PTHR24056:SF495">
    <property type="entry name" value="CYCLIN-DEPENDENT KINASE 8-RELATED"/>
    <property type="match status" value="1"/>
</dbReference>
<dbReference type="Pfam" id="PF00069">
    <property type="entry name" value="Pkinase"/>
    <property type="match status" value="1"/>
</dbReference>
<dbReference type="SMART" id="SM00220">
    <property type="entry name" value="S_TKc"/>
    <property type="match status" value="1"/>
</dbReference>
<dbReference type="SUPFAM" id="SSF56112">
    <property type="entry name" value="Protein kinase-like (PK-like)"/>
    <property type="match status" value="1"/>
</dbReference>
<dbReference type="PROSITE" id="PS50011">
    <property type="entry name" value="PROTEIN_KINASE_DOM"/>
    <property type="match status" value="1"/>
</dbReference>
<dbReference type="PROSITE" id="PS00108">
    <property type="entry name" value="PROTEIN_KINASE_ST"/>
    <property type="match status" value="1"/>
</dbReference>
<protein>
    <recommendedName>
        <fullName>Serine/threonine-protein kinase ssn3</fullName>
        <ecNumber>2.7.11.22</ecNumber>
        <ecNumber>2.7.11.23</ecNumber>
    </recommendedName>
    <alternativeName>
        <fullName>Cyclin-dependent kinase 8</fullName>
    </alternativeName>
</protein>
<feature type="chain" id="PRO_0000312944" description="Serine/threonine-protein kinase ssn3">
    <location>
        <begin position="1"/>
        <end position="426"/>
    </location>
</feature>
<feature type="domain" description="Protein kinase" evidence="2">
    <location>
        <begin position="39"/>
        <end position="368"/>
    </location>
</feature>
<feature type="region of interest" description="Disordered" evidence="4">
    <location>
        <begin position="389"/>
        <end position="426"/>
    </location>
</feature>
<feature type="compositionally biased region" description="Basic and acidic residues" evidence="4">
    <location>
        <begin position="389"/>
        <end position="398"/>
    </location>
</feature>
<feature type="active site" description="Proton acceptor" evidence="2 3">
    <location>
        <position position="171"/>
    </location>
</feature>
<feature type="binding site" evidence="2">
    <location>
        <begin position="45"/>
        <end position="53"/>
    </location>
    <ligand>
        <name>ATP</name>
        <dbReference type="ChEBI" id="CHEBI:30616"/>
    </ligand>
</feature>
<feature type="binding site" evidence="2">
    <location>
        <position position="69"/>
    </location>
    <ligand>
        <name>ATP</name>
        <dbReference type="ChEBI" id="CHEBI:30616"/>
    </ligand>
</feature>
<keyword id="KW-0010">Activator</keyword>
<keyword id="KW-0067">ATP-binding</keyword>
<keyword id="KW-0418">Kinase</keyword>
<keyword id="KW-0460">Magnesium</keyword>
<keyword id="KW-0479">Metal-binding</keyword>
<keyword id="KW-0547">Nucleotide-binding</keyword>
<keyword id="KW-0539">Nucleus</keyword>
<keyword id="KW-1185">Reference proteome</keyword>
<keyword id="KW-0678">Repressor</keyword>
<keyword id="KW-0723">Serine/threonine-protein kinase</keyword>
<keyword id="KW-0804">Transcription</keyword>
<keyword id="KW-0805">Transcription regulation</keyword>
<keyword id="KW-0808">Transferase</keyword>
<sequence length="426" mass="48039">MLGRNFPYFNSVGGFYSRENSRRQPGTGYTSKVRVRDKYHIVGFISSGTYGRVYKAVGRNGQGGEFAIKKFKPDKEGDIIQYTGLSQSAIREMALCSELDHANVVQLAEIILEDKCIFMVFEYTEHDLLQIIHHHTQPQRHPIPAAMVRSILFQLLNGLLYLHTNWVLHRDLKPANILVTSSGAIRIGDLGLARLFYKPLNSLFSGDKVVVTIWYRAPELLMGSRHYTPAVDLWAVGCIFAELLSLRPIFKGEEAKMDSKKTVPFQRNQMMKIIDIMGLPHRDNWPGIVHMPEYSQLQSLAMSRAPNHISRTSNLGSWYQNCLKNGGYSVNSSVGTPGDDGFDLLSRLLDYDPTSRITAKEALEHPYFKNGGPISANCFEGFEGKYPHRRITHDDNDIRSGSLPGTKRSGLPDDSLMSRAAKRMKE</sequence>
<evidence type="ECO:0000250" key="1"/>
<evidence type="ECO:0000255" key="2">
    <source>
        <dbReference type="PROSITE-ProRule" id="PRU00159"/>
    </source>
</evidence>
<evidence type="ECO:0000255" key="3">
    <source>
        <dbReference type="PROSITE-ProRule" id="PRU10027"/>
    </source>
</evidence>
<evidence type="ECO:0000256" key="4">
    <source>
        <dbReference type="SAM" id="MobiDB-lite"/>
    </source>
</evidence>
<evidence type="ECO:0000305" key="5"/>
<accession>Q5BAE1</accession>
<accession>C8VPB5</accession>